<reference key="1">
    <citation type="submission" date="2003-01" db="EMBL/GenBank/DDBJ databases">
        <title>Full-length cDNA libraries and normalization.</title>
        <authorList>
            <person name="Li W.B."/>
            <person name="Gruber C."/>
            <person name="Jessee J."/>
            <person name="Polayes D."/>
        </authorList>
    </citation>
    <scope>NUCLEOTIDE SEQUENCE [LARGE SCALE MRNA]</scope>
    <source>
        <tissue>Placenta</tissue>
    </source>
</reference>
<reference key="2">
    <citation type="journal article" date="2004" name="Nat. Genet.">
        <title>Complete sequencing and characterization of 21,243 full-length human cDNAs.</title>
        <authorList>
            <person name="Ota T."/>
            <person name="Suzuki Y."/>
            <person name="Nishikawa T."/>
            <person name="Otsuki T."/>
            <person name="Sugiyama T."/>
            <person name="Irie R."/>
            <person name="Wakamatsu A."/>
            <person name="Hayashi K."/>
            <person name="Sato H."/>
            <person name="Nagai K."/>
            <person name="Kimura K."/>
            <person name="Makita H."/>
            <person name="Sekine M."/>
            <person name="Obayashi M."/>
            <person name="Nishi T."/>
            <person name="Shibahara T."/>
            <person name="Tanaka T."/>
            <person name="Ishii S."/>
            <person name="Yamamoto J."/>
            <person name="Saito K."/>
            <person name="Kawai Y."/>
            <person name="Isono Y."/>
            <person name="Nakamura Y."/>
            <person name="Nagahari K."/>
            <person name="Murakami K."/>
            <person name="Yasuda T."/>
            <person name="Iwayanagi T."/>
            <person name="Wagatsuma M."/>
            <person name="Shiratori A."/>
            <person name="Sudo H."/>
            <person name="Hosoiri T."/>
            <person name="Kaku Y."/>
            <person name="Kodaira H."/>
            <person name="Kondo H."/>
            <person name="Sugawara M."/>
            <person name="Takahashi M."/>
            <person name="Kanda K."/>
            <person name="Yokoi T."/>
            <person name="Furuya T."/>
            <person name="Kikkawa E."/>
            <person name="Omura Y."/>
            <person name="Abe K."/>
            <person name="Kamihara K."/>
            <person name="Katsuta N."/>
            <person name="Sato K."/>
            <person name="Tanikawa M."/>
            <person name="Yamazaki M."/>
            <person name="Ninomiya K."/>
            <person name="Ishibashi T."/>
            <person name="Yamashita H."/>
            <person name="Murakawa K."/>
            <person name="Fujimori K."/>
            <person name="Tanai H."/>
            <person name="Kimata M."/>
            <person name="Watanabe M."/>
            <person name="Hiraoka S."/>
            <person name="Chiba Y."/>
            <person name="Ishida S."/>
            <person name="Ono Y."/>
            <person name="Takiguchi S."/>
            <person name="Watanabe S."/>
            <person name="Yosida M."/>
            <person name="Hotuta T."/>
            <person name="Kusano J."/>
            <person name="Kanehori K."/>
            <person name="Takahashi-Fujii A."/>
            <person name="Hara H."/>
            <person name="Tanase T.-O."/>
            <person name="Nomura Y."/>
            <person name="Togiya S."/>
            <person name="Komai F."/>
            <person name="Hara R."/>
            <person name="Takeuchi K."/>
            <person name="Arita M."/>
            <person name="Imose N."/>
            <person name="Musashino K."/>
            <person name="Yuuki H."/>
            <person name="Oshima A."/>
            <person name="Sasaki N."/>
            <person name="Aotsuka S."/>
            <person name="Yoshikawa Y."/>
            <person name="Matsunawa H."/>
            <person name="Ichihara T."/>
            <person name="Shiohata N."/>
            <person name="Sano S."/>
            <person name="Moriya S."/>
            <person name="Momiyama H."/>
            <person name="Satoh N."/>
            <person name="Takami S."/>
            <person name="Terashima Y."/>
            <person name="Suzuki O."/>
            <person name="Nakagawa S."/>
            <person name="Senoh A."/>
            <person name="Mizoguchi H."/>
            <person name="Goto Y."/>
            <person name="Shimizu F."/>
            <person name="Wakebe H."/>
            <person name="Hishigaki H."/>
            <person name="Watanabe T."/>
            <person name="Sugiyama A."/>
            <person name="Takemoto M."/>
            <person name="Kawakami B."/>
            <person name="Yamazaki M."/>
            <person name="Watanabe K."/>
            <person name="Kumagai A."/>
            <person name="Itakura S."/>
            <person name="Fukuzumi Y."/>
            <person name="Fujimori Y."/>
            <person name="Komiyama M."/>
            <person name="Tashiro H."/>
            <person name="Tanigami A."/>
            <person name="Fujiwara T."/>
            <person name="Ono T."/>
            <person name="Yamada K."/>
            <person name="Fujii Y."/>
            <person name="Ozaki K."/>
            <person name="Hirao M."/>
            <person name="Ohmori Y."/>
            <person name="Kawabata A."/>
            <person name="Hikiji T."/>
            <person name="Kobatake N."/>
            <person name="Inagaki H."/>
            <person name="Ikema Y."/>
            <person name="Okamoto S."/>
            <person name="Okitani R."/>
            <person name="Kawakami T."/>
            <person name="Noguchi S."/>
            <person name="Itoh T."/>
            <person name="Shigeta K."/>
            <person name="Senba T."/>
            <person name="Matsumura K."/>
            <person name="Nakajima Y."/>
            <person name="Mizuno T."/>
            <person name="Morinaga M."/>
            <person name="Sasaki M."/>
            <person name="Togashi T."/>
            <person name="Oyama M."/>
            <person name="Hata H."/>
            <person name="Watanabe M."/>
            <person name="Komatsu T."/>
            <person name="Mizushima-Sugano J."/>
            <person name="Satoh T."/>
            <person name="Shirai Y."/>
            <person name="Takahashi Y."/>
            <person name="Nakagawa K."/>
            <person name="Okumura K."/>
            <person name="Nagase T."/>
            <person name="Nomura N."/>
            <person name="Kikuchi H."/>
            <person name="Masuho Y."/>
            <person name="Yamashita R."/>
            <person name="Nakai K."/>
            <person name="Yada T."/>
            <person name="Nakamura Y."/>
            <person name="Ohara O."/>
            <person name="Isogai T."/>
            <person name="Sugano S."/>
        </authorList>
    </citation>
    <scope>NUCLEOTIDE SEQUENCE [LARGE SCALE MRNA]</scope>
    <source>
        <tissue>Testis</tissue>
    </source>
</reference>
<reference key="3">
    <citation type="journal article" date="2003" name="Genome Res.">
        <title>The secreted protein discovery initiative (SPDI), a large-scale effort to identify novel human secreted and transmembrane proteins: a bioinformatics assessment.</title>
        <authorList>
            <person name="Clark H.F."/>
            <person name="Gurney A.L."/>
            <person name="Abaya E."/>
            <person name="Baker K."/>
            <person name="Baldwin D.T."/>
            <person name="Brush J."/>
            <person name="Chen J."/>
            <person name="Chow B."/>
            <person name="Chui C."/>
            <person name="Crowley C."/>
            <person name="Currell B."/>
            <person name="Deuel B."/>
            <person name="Dowd P."/>
            <person name="Eaton D."/>
            <person name="Foster J.S."/>
            <person name="Grimaldi C."/>
            <person name="Gu Q."/>
            <person name="Hass P.E."/>
            <person name="Heldens S."/>
            <person name="Huang A."/>
            <person name="Kim H.S."/>
            <person name="Klimowski L."/>
            <person name="Jin Y."/>
            <person name="Johnson S."/>
            <person name="Lee J."/>
            <person name="Lewis L."/>
            <person name="Liao D."/>
            <person name="Mark M.R."/>
            <person name="Robbie E."/>
            <person name="Sanchez C."/>
            <person name="Schoenfeld J."/>
            <person name="Seshagiri S."/>
            <person name="Simmons L."/>
            <person name="Singh J."/>
            <person name="Smith V."/>
            <person name="Stinson J."/>
            <person name="Vagts A."/>
            <person name="Vandlen R.L."/>
            <person name="Watanabe C."/>
            <person name="Wieand D."/>
            <person name="Woods K."/>
            <person name="Xie M.-H."/>
            <person name="Yansura D.G."/>
            <person name="Yi S."/>
            <person name="Yu G."/>
            <person name="Yuan J."/>
            <person name="Zhang M."/>
            <person name="Zhang Z."/>
            <person name="Goddard A.D."/>
            <person name="Wood W.I."/>
            <person name="Godowski P.J."/>
            <person name="Gray A.M."/>
        </authorList>
    </citation>
    <scope>NUCLEOTIDE SEQUENCE [LARGE SCALE MRNA]</scope>
</reference>
<reference key="4">
    <citation type="journal article" date="2004" name="Genome Res.">
        <title>The status, quality, and expansion of the NIH full-length cDNA project: the Mammalian Gene Collection (MGC).</title>
        <authorList>
            <consortium name="The MGC Project Team"/>
        </authorList>
    </citation>
    <scope>NUCLEOTIDE SEQUENCE [LARGE SCALE MRNA]</scope>
    <source>
        <tissue>Testis</tissue>
    </source>
</reference>
<feature type="signal peptide" evidence="2">
    <location>
        <begin position="1"/>
        <end position="16"/>
    </location>
</feature>
<feature type="chain" id="PRO_0000030908" description="Putative inactive ribonuclease 11">
    <location>
        <begin position="17"/>
        <end position="199"/>
    </location>
</feature>
<feature type="active site" description="Proton acceptor" evidence="1">
    <location>
        <position position="82"/>
    </location>
</feature>
<feature type="binding site" evidence="1">
    <location>
        <begin position="115"/>
        <end position="119"/>
    </location>
    <ligand>
        <name>substrate</name>
    </ligand>
</feature>
<feature type="glycosylation site" description="N-linked (GlcNAc...) asparagine" evidence="2">
    <location>
        <position position="61"/>
    </location>
</feature>
<feature type="glycosylation site" description="N-linked (GlcNAc...) asparagine" evidence="2">
    <location>
        <position position="89"/>
    </location>
</feature>
<feature type="glycosylation site" description="N-linked (GlcNAc...) asparagine" evidence="2">
    <location>
        <position position="111"/>
    </location>
</feature>
<feature type="disulfide bond" evidence="1">
    <location>
        <begin position="98"/>
        <end position="158"/>
    </location>
</feature>
<feature type="disulfide bond" evidence="1">
    <location>
        <begin position="114"/>
        <end position="169"/>
    </location>
</feature>
<feature type="sequence variant" id="VAR_052195" description="In dbSNP:rs17113756.">
    <original>P</original>
    <variation>S</variation>
    <location>
        <position position="5"/>
    </location>
</feature>
<feature type="sequence variant" id="VAR_052196" description="In dbSNP:rs35818240.">
    <original>T</original>
    <variation>S</variation>
    <location>
        <position position="74"/>
    </location>
</feature>
<sequence>METFPLLLLSLGLVLAEASESTMKIIKEEFTDEEMQYDMAKSGQEKQTIEILMNPILLVKNTSLSMSKDDMSSTLLTFRSLHYNDPKGNSSGNDKECCNDMTVWRKVSEANGSCKWSNNFIRSSTEVMRRVHRAPSCKFVQNPGISCCESLELENTVCQFTTGKQFPRCQYHSVTSLEKILTVLTGHSLMSWLVCGSKL</sequence>
<protein>
    <recommendedName>
        <fullName>Putative inactive ribonuclease 11</fullName>
        <shortName>RNase 11</shortName>
    </recommendedName>
</protein>
<dbReference type="EMBL" id="BX161458">
    <property type="protein sequence ID" value="CAD61920.1"/>
    <property type="molecule type" value="mRNA"/>
</dbReference>
<dbReference type="EMBL" id="AK098687">
    <property type="protein sequence ID" value="BAC05378.1"/>
    <property type="molecule type" value="mRNA"/>
</dbReference>
<dbReference type="EMBL" id="AY358794">
    <property type="protein sequence ID" value="AAQ89154.1"/>
    <property type="molecule type" value="mRNA"/>
</dbReference>
<dbReference type="EMBL" id="BC025410">
    <property type="protein sequence ID" value="AAH25410.1"/>
    <property type="molecule type" value="mRNA"/>
</dbReference>
<dbReference type="CCDS" id="CCDS9553.1"/>
<dbReference type="RefSeq" id="NP_001381118.1">
    <property type="nucleotide sequence ID" value="NM_001394189.1"/>
</dbReference>
<dbReference type="RefSeq" id="NP_001381119.1">
    <property type="nucleotide sequence ID" value="NM_001394190.1"/>
</dbReference>
<dbReference type="RefSeq" id="NP_001381120.1">
    <property type="nucleotide sequence ID" value="NM_001394191.1"/>
</dbReference>
<dbReference type="RefSeq" id="NP_001381121.1">
    <property type="nucleotide sequence ID" value="NM_001394192.1"/>
</dbReference>
<dbReference type="RefSeq" id="NP_001381122.1">
    <property type="nucleotide sequence ID" value="NM_001394193.1"/>
</dbReference>
<dbReference type="RefSeq" id="NP_001381123.1">
    <property type="nucleotide sequence ID" value="NM_001394194.1"/>
</dbReference>
<dbReference type="RefSeq" id="NP_001381124.1">
    <property type="nucleotide sequence ID" value="NM_001394195.1"/>
</dbReference>
<dbReference type="RefSeq" id="NP_001381125.1">
    <property type="nucleotide sequence ID" value="NM_001394196.1"/>
</dbReference>
<dbReference type="RefSeq" id="NP_660293.1">
    <property type="nucleotide sequence ID" value="NM_145250.5"/>
</dbReference>
<dbReference type="SMR" id="Q8TAA1"/>
<dbReference type="BioGRID" id="125785">
    <property type="interactions" value="2"/>
</dbReference>
<dbReference type="FunCoup" id="Q8TAA1">
    <property type="interactions" value="5"/>
</dbReference>
<dbReference type="IntAct" id="Q8TAA1">
    <property type="interactions" value="1"/>
</dbReference>
<dbReference type="STRING" id="9606.ENSP00000451318"/>
<dbReference type="GlyCosmos" id="Q8TAA1">
    <property type="glycosylation" value="3 sites, No reported glycans"/>
</dbReference>
<dbReference type="GlyGen" id="Q8TAA1">
    <property type="glycosylation" value="3 sites"/>
</dbReference>
<dbReference type="iPTMnet" id="Q8TAA1"/>
<dbReference type="PhosphoSitePlus" id="Q8TAA1"/>
<dbReference type="BioMuta" id="RNASE11"/>
<dbReference type="DMDM" id="31340020"/>
<dbReference type="MassIVE" id="Q8TAA1"/>
<dbReference type="PaxDb" id="9606-ENSP00000451318"/>
<dbReference type="PeptideAtlas" id="Q8TAA1"/>
<dbReference type="ProteomicsDB" id="73843"/>
<dbReference type="Antibodypedia" id="168">
    <property type="antibodies" value="220 antibodies from 23 providers"/>
</dbReference>
<dbReference type="DNASU" id="122651"/>
<dbReference type="Ensembl" id="ENST00000398008.6">
    <property type="protein sequence ID" value="ENSP00000381092.2"/>
    <property type="gene ID" value="ENSG00000173464.16"/>
</dbReference>
<dbReference type="Ensembl" id="ENST00000398009.6">
    <property type="protein sequence ID" value="ENSP00000381093.2"/>
    <property type="gene ID" value="ENSG00000173464.16"/>
</dbReference>
<dbReference type="Ensembl" id="ENST00000432835.6">
    <property type="protein sequence ID" value="ENSP00000395210.2"/>
    <property type="gene ID" value="ENSG00000173464.16"/>
</dbReference>
<dbReference type="Ensembl" id="ENST00000553849.1">
    <property type="protein sequence ID" value="ENSP00000451318.1"/>
    <property type="gene ID" value="ENSG00000173464.16"/>
</dbReference>
<dbReference type="Ensembl" id="ENST00000555841.5">
    <property type="protein sequence ID" value="ENSP00000451563.1"/>
    <property type="gene ID" value="ENSG00000173464.16"/>
</dbReference>
<dbReference type="Ensembl" id="ENST00000557105.7">
    <property type="protein sequence ID" value="ENSP00000452412.2"/>
    <property type="gene ID" value="ENSG00000173464.16"/>
</dbReference>
<dbReference type="GeneID" id="122651"/>
<dbReference type="KEGG" id="hsa:122651"/>
<dbReference type="MANE-Select" id="ENST00000557105.7">
    <property type="protein sequence ID" value="ENSP00000452412.2"/>
    <property type="RefSeq nucleotide sequence ID" value="NM_001394190.1"/>
    <property type="RefSeq protein sequence ID" value="NP_001381119.1"/>
</dbReference>
<dbReference type="UCSC" id="uc010ahv.4">
    <property type="organism name" value="human"/>
</dbReference>
<dbReference type="AGR" id="HGNC:19269"/>
<dbReference type="CTD" id="122651"/>
<dbReference type="GeneCards" id="RNASE11"/>
<dbReference type="HGNC" id="HGNC:19269">
    <property type="gene designation" value="RNASE11"/>
</dbReference>
<dbReference type="HPA" id="ENSG00000173464">
    <property type="expression patterns" value="Tissue enriched (epididymis)"/>
</dbReference>
<dbReference type="neXtProt" id="NX_Q8TAA1"/>
<dbReference type="PharmGKB" id="PA134929509"/>
<dbReference type="VEuPathDB" id="HostDB:ENSG00000173464"/>
<dbReference type="eggNOG" id="ENOG502RR9B">
    <property type="taxonomic scope" value="Eukaryota"/>
</dbReference>
<dbReference type="GeneTree" id="ENSGT00510000049471"/>
<dbReference type="HOGENOM" id="CLU_122912_0_0_1"/>
<dbReference type="InParanoid" id="Q8TAA1"/>
<dbReference type="OMA" id="KCGQNLG"/>
<dbReference type="OrthoDB" id="9619113at2759"/>
<dbReference type="PAN-GO" id="Q8TAA1">
    <property type="GO annotations" value="1 GO annotation based on evolutionary models"/>
</dbReference>
<dbReference type="PhylomeDB" id="Q8TAA1"/>
<dbReference type="TreeFam" id="TF341929"/>
<dbReference type="PathwayCommons" id="Q8TAA1"/>
<dbReference type="SignaLink" id="Q8TAA1"/>
<dbReference type="BioGRID-ORCS" id="122651">
    <property type="hits" value="5 hits in 1129 CRISPR screens"/>
</dbReference>
<dbReference type="GenomeRNAi" id="122651"/>
<dbReference type="Pharos" id="Q8TAA1">
    <property type="development level" value="Tdark"/>
</dbReference>
<dbReference type="PRO" id="PR:Q8TAA1"/>
<dbReference type="Proteomes" id="UP000005640">
    <property type="component" value="Chromosome 14"/>
</dbReference>
<dbReference type="RNAct" id="Q8TAA1">
    <property type="molecule type" value="protein"/>
</dbReference>
<dbReference type="Bgee" id="ENSG00000173464">
    <property type="expression patterns" value="Expressed in left testis and 28 other cell types or tissues"/>
</dbReference>
<dbReference type="ExpressionAtlas" id="Q8TAA1">
    <property type="expression patterns" value="baseline"/>
</dbReference>
<dbReference type="GO" id="GO:0005576">
    <property type="term" value="C:extracellular region"/>
    <property type="evidence" value="ECO:0007669"/>
    <property type="project" value="UniProtKB-SubCell"/>
</dbReference>
<dbReference type="GO" id="GO:0004519">
    <property type="term" value="F:endonuclease activity"/>
    <property type="evidence" value="ECO:0007669"/>
    <property type="project" value="UniProtKB-KW"/>
</dbReference>
<dbReference type="GO" id="GO:0003676">
    <property type="term" value="F:nucleic acid binding"/>
    <property type="evidence" value="ECO:0007669"/>
    <property type="project" value="InterPro"/>
</dbReference>
<dbReference type="GO" id="GO:0050830">
    <property type="term" value="P:defense response to Gram-positive bacterium"/>
    <property type="evidence" value="ECO:0000318"/>
    <property type="project" value="GO_Central"/>
</dbReference>
<dbReference type="CDD" id="cd00163">
    <property type="entry name" value="RNase_A"/>
    <property type="match status" value="1"/>
</dbReference>
<dbReference type="Gene3D" id="3.10.130.10">
    <property type="entry name" value="Ribonuclease A-like domain"/>
    <property type="match status" value="1"/>
</dbReference>
<dbReference type="InterPro" id="IPR001427">
    <property type="entry name" value="RNaseA"/>
</dbReference>
<dbReference type="InterPro" id="IPR036816">
    <property type="entry name" value="RNaseA-like_dom_sf"/>
</dbReference>
<dbReference type="InterPro" id="IPR023412">
    <property type="entry name" value="RNaseA_domain"/>
</dbReference>
<dbReference type="PANTHER" id="PTHR11437">
    <property type="entry name" value="RIBONUCLEASE"/>
    <property type="match status" value="1"/>
</dbReference>
<dbReference type="PANTHER" id="PTHR11437:SF22">
    <property type="entry name" value="RIBONUCLEASE 11-RELATED"/>
    <property type="match status" value="1"/>
</dbReference>
<dbReference type="Pfam" id="PF00074">
    <property type="entry name" value="RnaseA"/>
    <property type="match status" value="1"/>
</dbReference>
<dbReference type="SUPFAM" id="SSF54076">
    <property type="entry name" value="RNase A-like"/>
    <property type="match status" value="1"/>
</dbReference>
<evidence type="ECO:0000250" key="1"/>
<evidence type="ECO:0000255" key="2"/>
<evidence type="ECO:0000305" key="3"/>
<name>RNS11_HUMAN</name>
<organism>
    <name type="scientific">Homo sapiens</name>
    <name type="common">Human</name>
    <dbReference type="NCBI Taxonomy" id="9606"/>
    <lineage>
        <taxon>Eukaryota</taxon>
        <taxon>Metazoa</taxon>
        <taxon>Chordata</taxon>
        <taxon>Craniata</taxon>
        <taxon>Vertebrata</taxon>
        <taxon>Euteleostomi</taxon>
        <taxon>Mammalia</taxon>
        <taxon>Eutheria</taxon>
        <taxon>Euarchontoglires</taxon>
        <taxon>Primates</taxon>
        <taxon>Haplorrhini</taxon>
        <taxon>Catarrhini</taxon>
        <taxon>Hominidae</taxon>
        <taxon>Homo</taxon>
    </lineage>
</organism>
<gene>
    <name type="primary">RNASE11</name>
    <name type="synonym">C14orf6</name>
    <name type="ORF">UNQ5832/PRO19669</name>
</gene>
<keyword id="KW-1015">Disulfide bond</keyword>
<keyword id="KW-0325">Glycoprotein</keyword>
<keyword id="KW-1267">Proteomics identification</keyword>
<keyword id="KW-1185">Reference proteome</keyword>
<keyword id="KW-0964">Secreted</keyword>
<keyword id="KW-0732">Signal</keyword>
<comment type="interaction">
    <interactant intactId="EBI-13063024">
        <id>Q8TAA1</id>
    </interactant>
    <interactant intactId="EBI-9087860">
        <id>P32243-2</id>
        <label>OTX2</label>
    </interactant>
    <organismsDiffer>false</organismsDiffer>
    <experiments>3</experiments>
</comment>
<comment type="subcellular location">
    <subcellularLocation>
        <location evidence="3">Secreted</location>
    </subcellularLocation>
</comment>
<comment type="similarity">
    <text evidence="3">Belongs to the pancreatic ribonuclease family.</text>
</comment>
<comment type="caution">
    <text evidence="3">Predicted to be catalytically inactive based on its sequences lacking the RNase A family-specific catalytic residues.</text>
</comment>
<proteinExistence type="evidence at protein level"/>
<accession>Q8TAA1</accession>